<organism>
    <name type="scientific">Thermoproteus tenax (strain ATCC 35583 / DSM 2078 / JCM 9277 / NBRC 100435 / Kra 1)</name>
    <dbReference type="NCBI Taxonomy" id="768679"/>
    <lineage>
        <taxon>Archaea</taxon>
        <taxon>Thermoproteota</taxon>
        <taxon>Thermoprotei</taxon>
        <taxon>Thermoproteales</taxon>
        <taxon>Thermoproteaceae</taxon>
        <taxon>Thermoproteus</taxon>
    </lineage>
</organism>
<comment type="function">
    <text evidence="1">CRISPR (clustered regularly interspaced short palindromic repeat), is an adaptive immune system that provides protection against mobile genetic elements (viruses, transposable elements and conjugative plasmids). CRISPR clusters contain sequences complementary to antecedent mobile elements and target invading nucleic acids. CRISPR clusters are transcribed and processed into CRISPR RNA (crRNA). Cas3 plus Cascade participate in CRISPR interference, the third stage of CRISPR immunity. Probably unwinds dsDNA templates, thus providing substrates for CRISPR-associated endonuclease Cas3-HD. Unwinding is strongly increased in the presence of ATP, implying the helicase uses ATP to unwind substrate (By similarity).</text>
</comment>
<comment type="subunit">
    <text evidence="4">Can form a Cascade complex with Csa5, Cas7, Cas5a, Cas3' and Cas8a2.</text>
</comment>
<comment type="induction">
    <text evidence="4">Repressed by 5 J/m2 ultraviolet light and 50 mM NaCl, slightly induced by 20 J/m2 ultraviolet light, 100 and 150 mM Nacl. Member of the csa5-cas7-cas5a-cas3-cas3'-cas8a2 operon.</text>
</comment>
<comment type="domain">
    <text>Proteins of this family have an N-terminal nuclease domain and a C-terminal helicase/ATPase domain. In some CRISPR/Cas systems the domains are swapped, in others they are encoded separately.</text>
</comment>
<comment type="similarity">
    <text evidence="5">Belongs to the CRISPR-associated helicase Cas3 family.</text>
</comment>
<evidence type="ECO:0000250" key="1"/>
<evidence type="ECO:0000255" key="2">
    <source>
        <dbReference type="PROSITE-ProRule" id="PRU00541"/>
    </source>
</evidence>
<evidence type="ECO:0000255" key="3">
    <source>
        <dbReference type="PROSITE-ProRule" id="PRU00542"/>
    </source>
</evidence>
<evidence type="ECO:0000269" key="4">
    <source>
    </source>
</evidence>
<evidence type="ECO:0000305" key="5"/>
<name>CS3HE_THETK</name>
<keyword id="KW-0051">Antiviral defense</keyword>
<keyword id="KW-0067">ATP-binding</keyword>
<keyword id="KW-0347">Helicase</keyword>
<keyword id="KW-0378">Hydrolase</keyword>
<keyword id="KW-0547">Nucleotide-binding</keyword>
<keyword id="KW-1185">Reference proteome</keyword>
<feature type="chain" id="PRO_0000422229" description="CRISPR-associated helicase Cas3">
    <location>
        <begin position="1"/>
        <end position="566"/>
    </location>
</feature>
<feature type="domain" description="Helicase ATP-binding" evidence="2">
    <location>
        <begin position="41"/>
        <end position="234"/>
    </location>
</feature>
<feature type="domain" description="Helicase C-terminal" evidence="3">
    <location>
        <begin position="250"/>
        <end position="400"/>
    </location>
</feature>
<feature type="short sequence motif" description="DEAH box">
    <location>
        <begin position="179"/>
        <end position="182"/>
    </location>
</feature>
<feature type="binding site" evidence="2">
    <location>
        <begin position="54"/>
        <end position="61"/>
    </location>
    <ligand>
        <name>ATP</name>
        <dbReference type="ChEBI" id="CHEBI:30616"/>
    </ligand>
</feature>
<protein>
    <recommendedName>
        <fullName>CRISPR-associated helicase Cas3</fullName>
        <ecNumber>3.6.4.-</ecNumber>
    </recommendedName>
</protein>
<proteinExistence type="evidence at protein level"/>
<reference key="1">
    <citation type="journal article" date="2011" name="PLoS ONE">
        <title>The complete genome sequence of Thermoproteus tenax: a physiologically versatile member of the Crenarchaeota.</title>
        <authorList>
            <person name="Siebers B."/>
            <person name="Zaparty M."/>
            <person name="Raddatz G."/>
            <person name="Tjaden B."/>
            <person name="Albers S.V."/>
            <person name="Bell S.D."/>
            <person name="Blombach F."/>
            <person name="Kletzin A."/>
            <person name="Kyrpides N."/>
            <person name="Lanz C."/>
            <person name="Plagens A."/>
            <person name="Rampp M."/>
            <person name="Rosinus A."/>
            <person name="von Jan M."/>
            <person name="Makarova K.S."/>
            <person name="Klenk H.P."/>
            <person name="Schuster S.C."/>
            <person name="Hensel R."/>
        </authorList>
    </citation>
    <scope>NUCLEOTIDE SEQUENCE [LARGE SCALE GENOMIC DNA]</scope>
    <source>
        <strain>ATCC 35583 / DSM 2078 / JCM 9277 / NBRC 100435 / Kra 1</strain>
    </source>
</reference>
<reference key="2">
    <citation type="journal article" date="2012" name="J. Bacteriol.">
        <title>Characterization of the CRISPR/Cas subtype I-A system of the hyperthermophilic crenarchaeon Thermoproteus tenax.</title>
        <authorList>
            <person name="Plagens A."/>
            <person name="Tjaden B."/>
            <person name="Hagemann A."/>
            <person name="Randau L."/>
            <person name="Hensel R."/>
        </authorList>
    </citation>
    <scope>SUBUNIT</scope>
    <scope>INDUCTION</scope>
    <scope>OPERON STRUCTURE</scope>
    <source>
        <strain>ATCC 35583 / DSM 2078 / JCM 9277 / NBRC 100435 / Kra 1</strain>
    </source>
</reference>
<sequence length="566" mass="63347">MVGRRLDTLVRELSLAWCRSKGEPSCAVREDLLAEQAKAAEVIERSDGVILLKAPTGFGKTEIWTAPFFAQWLRGEWFAPRMYVVEPMHALLRQMKRRMEVYAQAVQGLGLPRLNVAEDHGEVAKPLFLYGGHIVLTTVDSLAYGYLARRVQRWREEGVERGRYSMPAGLLASAYIVLDEAHLIQDEAYLGPRVLGKIVCDLASAGAKVVISTATVPETFLKHIPCLGGRLTLGSGTVRRNVKVERRKGVLKAEEIECGKPTIVIVNTIERARRIYKQVRCGKKAVVHSLMRREDKERQLSKVLADGKVAEDAVLIGTQALEVGLDFSNLRALYTETAPVDALIQRIGRVGRDGDKAEAYIYEAEGDAPYPQTLMRATREALEKELLGGAALTSWEDAQRAVDKVYNEKAVEELMTRGLAWYGQALGYLQELSLFSYPPRGEVRIRPSNYITLVIADVKQDGDKGRYITEDDVERGAMKMSYTSRDDPRINALLQKVSTAYTVRGVATAKDETRYYLSELRRSWDGVEVVVVDRRDVEELYDEAGLDVAQLSGGGQKRKGRGRRRR</sequence>
<gene>
    <name type="primary">cas3</name>
    <name type="synonym">cas3'</name>
    <name type="ordered locus">TTX_1253</name>
</gene>
<dbReference type="EC" id="3.6.4.-"/>
<dbReference type="EMBL" id="FN869859">
    <property type="protein sequence ID" value="CCC81888.1"/>
    <property type="molecule type" value="Genomic_DNA"/>
</dbReference>
<dbReference type="RefSeq" id="WP_014127143.1">
    <property type="nucleotide sequence ID" value="NC_016070.1"/>
</dbReference>
<dbReference type="SMR" id="G4RJZ3"/>
<dbReference type="STRING" id="768679.TTX_1253"/>
<dbReference type="PaxDb" id="768679-TTX_1253"/>
<dbReference type="GeneID" id="11262133"/>
<dbReference type="KEGG" id="ttn:TTX_1253"/>
<dbReference type="PATRIC" id="fig|768679.9.peg.1266"/>
<dbReference type="eggNOG" id="arCOG01444">
    <property type="taxonomic scope" value="Archaea"/>
</dbReference>
<dbReference type="HOGENOM" id="CLU_491460_0_0_2"/>
<dbReference type="OrthoDB" id="43851at2157"/>
<dbReference type="Proteomes" id="UP000002654">
    <property type="component" value="Chromosome"/>
</dbReference>
<dbReference type="GO" id="GO:0005829">
    <property type="term" value="C:cytosol"/>
    <property type="evidence" value="ECO:0007669"/>
    <property type="project" value="TreeGrafter"/>
</dbReference>
<dbReference type="GO" id="GO:0005524">
    <property type="term" value="F:ATP binding"/>
    <property type="evidence" value="ECO:0007669"/>
    <property type="project" value="UniProtKB-KW"/>
</dbReference>
<dbReference type="GO" id="GO:0140097">
    <property type="term" value="F:catalytic activity, acting on DNA"/>
    <property type="evidence" value="ECO:0007669"/>
    <property type="project" value="UniProtKB-ARBA"/>
</dbReference>
<dbReference type="GO" id="GO:0016787">
    <property type="term" value="F:hydrolase activity"/>
    <property type="evidence" value="ECO:0007669"/>
    <property type="project" value="UniProtKB-KW"/>
</dbReference>
<dbReference type="GO" id="GO:0003676">
    <property type="term" value="F:nucleic acid binding"/>
    <property type="evidence" value="ECO:0007669"/>
    <property type="project" value="InterPro"/>
</dbReference>
<dbReference type="GO" id="GO:0003724">
    <property type="term" value="F:RNA helicase activity"/>
    <property type="evidence" value="ECO:0007669"/>
    <property type="project" value="TreeGrafter"/>
</dbReference>
<dbReference type="GO" id="GO:0051607">
    <property type="term" value="P:defense response to virus"/>
    <property type="evidence" value="ECO:0007669"/>
    <property type="project" value="UniProtKB-KW"/>
</dbReference>
<dbReference type="Gene3D" id="3.40.50.300">
    <property type="entry name" value="P-loop containing nucleotide triphosphate hydrolases"/>
    <property type="match status" value="2"/>
</dbReference>
<dbReference type="InterPro" id="IPR054712">
    <property type="entry name" value="Cas3-like_dom"/>
</dbReference>
<dbReference type="InterPro" id="IPR011545">
    <property type="entry name" value="DEAD/DEAH_box_helicase_dom"/>
</dbReference>
<dbReference type="InterPro" id="IPR050079">
    <property type="entry name" value="DEAD_box_RNA_helicase"/>
</dbReference>
<dbReference type="InterPro" id="IPR014001">
    <property type="entry name" value="Helicase_ATP-bd"/>
</dbReference>
<dbReference type="InterPro" id="IPR001650">
    <property type="entry name" value="Helicase_C-like"/>
</dbReference>
<dbReference type="InterPro" id="IPR006474">
    <property type="entry name" value="Helicase_Cas3_CRISPR-ass_core"/>
</dbReference>
<dbReference type="InterPro" id="IPR027417">
    <property type="entry name" value="P-loop_NTPase"/>
</dbReference>
<dbReference type="NCBIfam" id="TIGR01587">
    <property type="entry name" value="cas3_core"/>
    <property type="match status" value="1"/>
</dbReference>
<dbReference type="PANTHER" id="PTHR47959">
    <property type="entry name" value="ATP-DEPENDENT RNA HELICASE RHLE-RELATED"/>
    <property type="match status" value="1"/>
</dbReference>
<dbReference type="PANTHER" id="PTHR47959:SF16">
    <property type="entry name" value="CRISPR-ASSOCIATED NUCLEASE_HELICASE CAS3-RELATED"/>
    <property type="match status" value="1"/>
</dbReference>
<dbReference type="Pfam" id="PF22590">
    <property type="entry name" value="Cas3-like_C_2"/>
    <property type="match status" value="1"/>
</dbReference>
<dbReference type="Pfam" id="PF00270">
    <property type="entry name" value="DEAD"/>
    <property type="match status" value="1"/>
</dbReference>
<dbReference type="SMART" id="SM00487">
    <property type="entry name" value="DEXDc"/>
    <property type="match status" value="1"/>
</dbReference>
<dbReference type="SMART" id="SM00490">
    <property type="entry name" value="HELICc"/>
    <property type="match status" value="1"/>
</dbReference>
<dbReference type="SUPFAM" id="SSF52540">
    <property type="entry name" value="P-loop containing nucleoside triphosphate hydrolases"/>
    <property type="match status" value="1"/>
</dbReference>
<dbReference type="PROSITE" id="PS51192">
    <property type="entry name" value="HELICASE_ATP_BIND_1"/>
    <property type="match status" value="1"/>
</dbReference>
<dbReference type="PROSITE" id="PS51194">
    <property type="entry name" value="HELICASE_CTER"/>
    <property type="match status" value="1"/>
</dbReference>
<accession>G4RJZ3</accession>